<protein>
    <recommendedName>
        <fullName>UDP-N-acetyl-D-mannosamine dehydrogenase</fullName>
        <ecNumber evidence="3">1.1.1.336</ecNumber>
    </recommendedName>
    <alternativeName>
        <fullName>UDP-ManNAc 6-dehydrogenase</fullName>
    </alternativeName>
</protein>
<dbReference type="EC" id="1.1.1.336" evidence="3"/>
<dbReference type="EMBL" id="CP000745">
    <property type="protein sequence ID" value="ABR66789.1"/>
    <property type="molecule type" value="Genomic_DNA"/>
</dbReference>
<dbReference type="SMR" id="A6VK13"/>
<dbReference type="STRING" id="426368.MmarC7_1733"/>
<dbReference type="KEGG" id="mmz:MmarC7_1733"/>
<dbReference type="eggNOG" id="arCOG00252">
    <property type="taxonomic scope" value="Archaea"/>
</dbReference>
<dbReference type="HOGENOM" id="CLU_023810_3_2_2"/>
<dbReference type="OrthoDB" id="372050at2157"/>
<dbReference type="GO" id="GO:0051287">
    <property type="term" value="F:NAD binding"/>
    <property type="evidence" value="ECO:0007669"/>
    <property type="project" value="InterPro"/>
</dbReference>
<dbReference type="GO" id="GO:0016628">
    <property type="term" value="F:oxidoreductase activity, acting on the CH-CH group of donors, NAD or NADP as acceptor"/>
    <property type="evidence" value="ECO:0007669"/>
    <property type="project" value="InterPro"/>
</dbReference>
<dbReference type="GO" id="GO:0089714">
    <property type="term" value="F:UDP-N-acetyl-D-mannosamine dehydrogenase activity"/>
    <property type="evidence" value="ECO:0007669"/>
    <property type="project" value="UniProtKB-EC"/>
</dbReference>
<dbReference type="GO" id="GO:0000271">
    <property type="term" value="P:polysaccharide biosynthetic process"/>
    <property type="evidence" value="ECO:0007669"/>
    <property type="project" value="InterPro"/>
</dbReference>
<dbReference type="FunFam" id="3.40.50.720:FF:000945">
    <property type="entry name" value="UDP-glucose/GDP-mannose dehydrogenase family protein"/>
    <property type="match status" value="1"/>
</dbReference>
<dbReference type="Gene3D" id="3.40.50.720">
    <property type="entry name" value="NAD(P)-binding Rossmann-like Domain"/>
    <property type="match status" value="2"/>
</dbReference>
<dbReference type="InterPro" id="IPR008927">
    <property type="entry name" value="6-PGluconate_DH-like_C_sf"/>
</dbReference>
<dbReference type="InterPro" id="IPR036291">
    <property type="entry name" value="NAD(P)-bd_dom_sf"/>
</dbReference>
<dbReference type="InterPro" id="IPR017476">
    <property type="entry name" value="UDP-Glc/GDP-Man"/>
</dbReference>
<dbReference type="InterPro" id="IPR014027">
    <property type="entry name" value="UDP-Glc/GDP-Man_DH_C"/>
</dbReference>
<dbReference type="InterPro" id="IPR036220">
    <property type="entry name" value="UDP-Glc/GDP-Man_DH_C_sf"/>
</dbReference>
<dbReference type="InterPro" id="IPR014026">
    <property type="entry name" value="UDP-Glc/GDP-Man_DH_dimer"/>
</dbReference>
<dbReference type="InterPro" id="IPR001732">
    <property type="entry name" value="UDP-Glc/GDP-Man_DH_N"/>
</dbReference>
<dbReference type="InterPro" id="IPR028359">
    <property type="entry name" value="UDP_ManNAc/GlcNAc_DH"/>
</dbReference>
<dbReference type="NCBIfam" id="TIGR03026">
    <property type="entry name" value="NDP-sugDHase"/>
    <property type="match status" value="1"/>
</dbReference>
<dbReference type="PANTHER" id="PTHR43491">
    <property type="entry name" value="UDP-N-ACETYL-D-MANNOSAMINE DEHYDROGENASE"/>
    <property type="match status" value="1"/>
</dbReference>
<dbReference type="PANTHER" id="PTHR43491:SF2">
    <property type="entry name" value="UDP-N-ACETYL-D-MANNOSAMINE DEHYDROGENASE"/>
    <property type="match status" value="1"/>
</dbReference>
<dbReference type="Pfam" id="PF00984">
    <property type="entry name" value="UDPG_MGDP_dh"/>
    <property type="match status" value="1"/>
</dbReference>
<dbReference type="Pfam" id="PF03720">
    <property type="entry name" value="UDPG_MGDP_dh_C"/>
    <property type="match status" value="1"/>
</dbReference>
<dbReference type="Pfam" id="PF03721">
    <property type="entry name" value="UDPG_MGDP_dh_N"/>
    <property type="match status" value="1"/>
</dbReference>
<dbReference type="PIRSF" id="PIRSF500136">
    <property type="entry name" value="UDP_ManNAc_DH"/>
    <property type="match status" value="1"/>
</dbReference>
<dbReference type="PIRSF" id="PIRSF000124">
    <property type="entry name" value="UDPglc_GDPman_dh"/>
    <property type="match status" value="1"/>
</dbReference>
<dbReference type="SMART" id="SM00984">
    <property type="entry name" value="UDPG_MGDP_dh_C"/>
    <property type="match status" value="1"/>
</dbReference>
<dbReference type="SUPFAM" id="SSF48179">
    <property type="entry name" value="6-phosphogluconate dehydrogenase C-terminal domain-like"/>
    <property type="match status" value="1"/>
</dbReference>
<dbReference type="SUPFAM" id="SSF51735">
    <property type="entry name" value="NAD(P)-binding Rossmann-fold domains"/>
    <property type="match status" value="1"/>
</dbReference>
<dbReference type="SUPFAM" id="SSF52413">
    <property type="entry name" value="UDP-glucose/GDP-mannose dehydrogenase C-terminal domain"/>
    <property type="match status" value="1"/>
</dbReference>
<reference key="1">
    <citation type="submission" date="2007-06" db="EMBL/GenBank/DDBJ databases">
        <title>Complete sequence of Methanococcus maripaludis C7.</title>
        <authorList>
            <consortium name="US DOE Joint Genome Institute"/>
            <person name="Copeland A."/>
            <person name="Lucas S."/>
            <person name="Lapidus A."/>
            <person name="Barry K."/>
            <person name="Glavina del Rio T."/>
            <person name="Dalin E."/>
            <person name="Tice H."/>
            <person name="Pitluck S."/>
            <person name="Clum A."/>
            <person name="Schmutz J."/>
            <person name="Larimer F."/>
            <person name="Land M."/>
            <person name="Hauser L."/>
            <person name="Kyrpides N."/>
            <person name="Anderson I."/>
            <person name="Sieprawska-Lupa M."/>
            <person name="Whitman W.B."/>
            <person name="Richardson P."/>
        </authorList>
    </citation>
    <scope>NUCLEOTIDE SEQUENCE [LARGE SCALE GENOMIC DNA]</scope>
    <source>
        <strain>C7 / ATCC BAA-1331</strain>
    </source>
</reference>
<name>WECC_METM7</name>
<keyword id="KW-0520">NAD</keyword>
<keyword id="KW-0560">Oxidoreductase</keyword>
<proteinExistence type="inferred from homology"/>
<comment type="function">
    <text evidence="3">Catalyzes the four-electron oxidation of UDP-N-acetyl-D-mannosamine (UDP-ManNAc), reducing NAD(+) and releasing UDP-N-acetylmannosaminuronic acid (UDP-ManNAcA).</text>
</comment>
<comment type="catalytic activity">
    <reaction evidence="3">
        <text>UDP-N-acetyl-alpha-D-mannosamine + 2 NAD(+) + H2O = UDP-N-acetyl-alpha-D-mannosaminouronate + 2 NADH + 3 H(+)</text>
        <dbReference type="Rhea" id="RHEA:25780"/>
        <dbReference type="ChEBI" id="CHEBI:15377"/>
        <dbReference type="ChEBI" id="CHEBI:15378"/>
        <dbReference type="ChEBI" id="CHEBI:57540"/>
        <dbReference type="ChEBI" id="CHEBI:57945"/>
        <dbReference type="ChEBI" id="CHEBI:68623"/>
        <dbReference type="ChEBI" id="CHEBI:70731"/>
        <dbReference type="EC" id="1.1.1.336"/>
    </reaction>
</comment>
<comment type="subunit">
    <text evidence="3">Homotetramer; probably dimer of dimers.</text>
</comment>
<comment type="similarity">
    <text evidence="4">Belongs to the UDP-glucose/GDP-mannose dehydrogenase family.</text>
</comment>
<sequence>MEKHGNYDIKKICVIGLGYIGLPTASMLANHGYEVVGVDVNEKRVNHIKNGELKIEEPGLLTLVKGAINSKNLNVQTSAEEADAFIICVPTPALENEDGSKKCDLTYVMSAVQAIIPFLKDGNLIVVESTIPPETTKKIYETINKKIYVAHCPERVLPGKILKELVENDRIIGGINKKSAEMAKEIYKSFVEGKIYITDSNTAEMVKLMENTYRDINIALANEFAKICDEIGVNVWDAIKIANKHPRVNILNPGPGVGGHCISIDPWFIVEKTNNAKFIRAARELNDNMPAYVCKSVLSELNKLGIEKPKISIFGATYKGNVEDTRESPSKNVIKMLLENGATVSTFDPHADCFEYPLSTLDECISGSDCIVVLTDHDAFKNIKKDDIDEICPKLKNKIVFDTKNILEHNLWKKAGFKVKLLGNGAW</sequence>
<accession>A6VK13</accession>
<organism>
    <name type="scientific">Methanococcus maripaludis (strain C7 / ATCC BAA-1331)</name>
    <dbReference type="NCBI Taxonomy" id="426368"/>
    <lineage>
        <taxon>Archaea</taxon>
        <taxon>Methanobacteriati</taxon>
        <taxon>Methanobacteriota</taxon>
        <taxon>Methanomada group</taxon>
        <taxon>Methanococci</taxon>
        <taxon>Methanococcales</taxon>
        <taxon>Methanococcaceae</taxon>
        <taxon>Methanococcus</taxon>
    </lineage>
</organism>
<gene>
    <name type="primary">wecC</name>
    <name type="ordered locus">MmarC7_1733</name>
</gene>
<feature type="chain" id="PRO_0000337838" description="UDP-N-acetyl-D-mannosamine dehydrogenase">
    <location>
        <begin position="1"/>
        <end position="427"/>
    </location>
</feature>
<feature type="active site" description="Proton donor/acceptor" evidence="1">
    <location>
        <position position="207"/>
    </location>
</feature>
<feature type="active site" description="Nucleophile" evidence="1">
    <location>
        <position position="261"/>
    </location>
</feature>
<feature type="binding site" description="in chain A" evidence="2">
    <location>
        <position position="19"/>
    </location>
    <ligand>
        <name>NAD(+)</name>
        <dbReference type="ChEBI" id="CHEBI:57540"/>
        <note>ligand shared between homodimeric partners</note>
    </ligand>
</feature>
<feature type="binding site" description="in chain A" evidence="2">
    <location>
        <position position="20"/>
    </location>
    <ligand>
        <name>NAD(+)</name>
        <dbReference type="ChEBI" id="CHEBI:57540"/>
        <note>ligand shared between homodimeric partners</note>
    </ligand>
</feature>
<feature type="binding site" description="in chain A" evidence="2">
    <location>
        <position position="39"/>
    </location>
    <ligand>
        <name>NAD(+)</name>
        <dbReference type="ChEBI" id="CHEBI:57540"/>
        <note>ligand shared between homodimeric partners</note>
    </ligand>
</feature>
<feature type="binding site" description="in chain A" evidence="2">
    <location>
        <position position="44"/>
    </location>
    <ligand>
        <name>NAD(+)</name>
        <dbReference type="ChEBI" id="CHEBI:57540"/>
        <note>ligand shared between homodimeric partners</note>
    </ligand>
</feature>
<feature type="binding site" description="in chain A" evidence="2">
    <location>
        <position position="91"/>
    </location>
    <ligand>
        <name>NAD(+)</name>
        <dbReference type="ChEBI" id="CHEBI:57540"/>
        <note>ligand shared between homodimeric partners</note>
    </ligand>
</feature>
<feature type="binding site" description="in chain A" evidence="2">
    <location>
        <position position="130"/>
    </location>
    <ligand>
        <name>NAD(+)</name>
        <dbReference type="ChEBI" id="CHEBI:57540"/>
        <note>ligand shared between homodimeric partners</note>
    </ligand>
</feature>
<feature type="binding site" description="in chain A" evidence="1">
    <location>
        <position position="155"/>
    </location>
    <ligand>
        <name>UDP-N-acetyl-alpha-D-mannosaminouronate</name>
        <dbReference type="ChEBI" id="CHEBI:70731"/>
        <note>ligand shared between homodimeric partners</note>
    </ligand>
</feature>
<feature type="binding site" description="in chain A" evidence="1">
    <location>
        <position position="156"/>
    </location>
    <ligand>
        <name>UDP-N-acetyl-alpha-D-mannosaminouronate</name>
        <dbReference type="ChEBI" id="CHEBI:70731"/>
        <note>ligand shared between homodimeric partners</note>
    </ligand>
</feature>
<feature type="binding site" description="in chain A" evidence="1">
    <location>
        <position position="207"/>
    </location>
    <ligand>
        <name>UDP-N-acetyl-alpha-D-mannosaminouronate</name>
        <dbReference type="ChEBI" id="CHEBI:70731"/>
        <note>ligand shared between homodimeric partners</note>
    </ligand>
</feature>
<feature type="binding site" description="in chain A" evidence="1">
    <location>
        <position position="211"/>
    </location>
    <ligand>
        <name>UDP-N-acetyl-alpha-D-mannosaminouronate</name>
        <dbReference type="ChEBI" id="CHEBI:70731"/>
        <note>ligand shared between homodimeric partners</note>
    </ligand>
</feature>
<feature type="binding site" description="in chain A" evidence="1">
    <location>
        <position position="214"/>
    </location>
    <ligand>
        <name>UDP-N-acetyl-alpha-D-mannosaminouronate</name>
        <dbReference type="ChEBI" id="CHEBI:70731"/>
        <note>ligand shared between homodimeric partners</note>
    </ligand>
</feature>
<feature type="binding site" description="in chain B" evidence="1">
    <location>
        <position position="245"/>
    </location>
    <ligand>
        <name>UDP-N-acetyl-alpha-D-mannosaminouronate</name>
        <dbReference type="ChEBI" id="CHEBI:70731"/>
        <note>ligand shared between homodimeric partners</note>
    </ligand>
</feature>
<feature type="binding site" description="in chain B" evidence="1">
    <location>
        <position position="247"/>
    </location>
    <ligand>
        <name>UDP-N-acetyl-alpha-D-mannosaminouronate</name>
        <dbReference type="ChEBI" id="CHEBI:70731"/>
        <note>ligand shared between homodimeric partners</note>
    </ligand>
</feature>
<feature type="binding site" description="in chain A" evidence="1">
    <location>
        <position position="258"/>
    </location>
    <ligand>
        <name>UDP-N-acetyl-alpha-D-mannosaminouronate</name>
        <dbReference type="ChEBI" id="CHEBI:70731"/>
        <note>ligand shared between homodimeric partners</note>
    </ligand>
</feature>
<feature type="binding site" description="in chain A" evidence="1">
    <location>
        <position position="318"/>
    </location>
    <ligand>
        <name>UDP-N-acetyl-alpha-D-mannosaminouronate</name>
        <dbReference type="ChEBI" id="CHEBI:70731"/>
        <note>ligand shared between homodimeric partners</note>
    </ligand>
</feature>
<feature type="binding site" description="in chain A" evidence="1">
    <location>
        <position position="319"/>
    </location>
    <ligand>
        <name>UDP-N-acetyl-alpha-D-mannosaminouronate</name>
        <dbReference type="ChEBI" id="CHEBI:70731"/>
        <note>ligand shared between homodimeric partners</note>
    </ligand>
</feature>
<feature type="binding site" description="in chain B" evidence="2">
    <location>
        <position position="326"/>
    </location>
    <ligand>
        <name>NAD(+)</name>
        <dbReference type="ChEBI" id="CHEBI:57540"/>
        <note>ligand shared between homodimeric partners</note>
    </ligand>
</feature>
<feature type="binding site" description="in chain A" evidence="1">
    <location>
        <position position="404"/>
    </location>
    <ligand>
        <name>UDP-N-acetyl-alpha-D-mannosaminouronate</name>
        <dbReference type="ChEBI" id="CHEBI:70731"/>
        <note>ligand shared between homodimeric partners</note>
    </ligand>
</feature>
<evidence type="ECO:0000250" key="1">
    <source>
        <dbReference type="UniProtKB" id="O59284"/>
    </source>
</evidence>
<evidence type="ECO:0000250" key="2">
    <source>
        <dbReference type="UniProtKB" id="P11759"/>
    </source>
</evidence>
<evidence type="ECO:0000250" key="3">
    <source>
        <dbReference type="UniProtKB" id="Q6LZC3"/>
    </source>
</evidence>
<evidence type="ECO:0000305" key="4"/>